<evidence type="ECO:0000255" key="1">
    <source>
        <dbReference type="HAMAP-Rule" id="MF_01328"/>
    </source>
</evidence>
<evidence type="ECO:0000256" key="2">
    <source>
        <dbReference type="SAM" id="MobiDB-lite"/>
    </source>
</evidence>
<evidence type="ECO:0000305" key="3"/>
<accession>Q250N1</accession>
<dbReference type="EMBL" id="AP008230">
    <property type="protein sequence ID" value="BAE82261.1"/>
    <property type="molecule type" value="Genomic_DNA"/>
</dbReference>
<dbReference type="RefSeq" id="WP_005810159.1">
    <property type="nucleotide sequence ID" value="NC_007907.1"/>
</dbReference>
<dbReference type="SMR" id="Q250N1"/>
<dbReference type="STRING" id="138119.DSY0472"/>
<dbReference type="KEGG" id="dsy:DSY0472"/>
<dbReference type="eggNOG" id="COG0088">
    <property type="taxonomic scope" value="Bacteria"/>
</dbReference>
<dbReference type="HOGENOM" id="CLU_041575_5_2_9"/>
<dbReference type="Proteomes" id="UP000001946">
    <property type="component" value="Chromosome"/>
</dbReference>
<dbReference type="GO" id="GO:1990904">
    <property type="term" value="C:ribonucleoprotein complex"/>
    <property type="evidence" value="ECO:0007669"/>
    <property type="project" value="UniProtKB-KW"/>
</dbReference>
<dbReference type="GO" id="GO:0005840">
    <property type="term" value="C:ribosome"/>
    <property type="evidence" value="ECO:0007669"/>
    <property type="project" value="UniProtKB-KW"/>
</dbReference>
<dbReference type="GO" id="GO:0019843">
    <property type="term" value="F:rRNA binding"/>
    <property type="evidence" value="ECO:0007669"/>
    <property type="project" value="UniProtKB-UniRule"/>
</dbReference>
<dbReference type="GO" id="GO:0003735">
    <property type="term" value="F:structural constituent of ribosome"/>
    <property type="evidence" value="ECO:0007669"/>
    <property type="project" value="InterPro"/>
</dbReference>
<dbReference type="GO" id="GO:0006412">
    <property type="term" value="P:translation"/>
    <property type="evidence" value="ECO:0007669"/>
    <property type="project" value="UniProtKB-UniRule"/>
</dbReference>
<dbReference type="Gene3D" id="3.40.1370.10">
    <property type="match status" value="1"/>
</dbReference>
<dbReference type="HAMAP" id="MF_01328_B">
    <property type="entry name" value="Ribosomal_uL4_B"/>
    <property type="match status" value="1"/>
</dbReference>
<dbReference type="InterPro" id="IPR002136">
    <property type="entry name" value="Ribosomal_uL4"/>
</dbReference>
<dbReference type="InterPro" id="IPR013005">
    <property type="entry name" value="Ribosomal_uL4-like"/>
</dbReference>
<dbReference type="InterPro" id="IPR023574">
    <property type="entry name" value="Ribosomal_uL4_dom_sf"/>
</dbReference>
<dbReference type="NCBIfam" id="TIGR03953">
    <property type="entry name" value="rplD_bact"/>
    <property type="match status" value="1"/>
</dbReference>
<dbReference type="PANTHER" id="PTHR10746">
    <property type="entry name" value="50S RIBOSOMAL PROTEIN L4"/>
    <property type="match status" value="1"/>
</dbReference>
<dbReference type="PANTHER" id="PTHR10746:SF6">
    <property type="entry name" value="LARGE RIBOSOMAL SUBUNIT PROTEIN UL4M"/>
    <property type="match status" value="1"/>
</dbReference>
<dbReference type="Pfam" id="PF00573">
    <property type="entry name" value="Ribosomal_L4"/>
    <property type="match status" value="1"/>
</dbReference>
<dbReference type="SUPFAM" id="SSF52166">
    <property type="entry name" value="Ribosomal protein L4"/>
    <property type="match status" value="1"/>
</dbReference>
<reference key="1">
    <citation type="journal article" date="2006" name="J. Bacteriol.">
        <title>Complete genome sequence of the dehalorespiring bacterium Desulfitobacterium hafniense Y51 and comparison with Dehalococcoides ethenogenes 195.</title>
        <authorList>
            <person name="Nonaka H."/>
            <person name="Keresztes G."/>
            <person name="Shinoda Y."/>
            <person name="Ikenaga Y."/>
            <person name="Abe M."/>
            <person name="Naito K."/>
            <person name="Inatomi K."/>
            <person name="Furukawa K."/>
            <person name="Inui M."/>
            <person name="Yukawa H."/>
        </authorList>
    </citation>
    <scope>NUCLEOTIDE SEQUENCE [LARGE SCALE GENOMIC DNA]</scope>
    <source>
        <strain>Y51</strain>
    </source>
</reference>
<sequence length="207" mass="22817">MPKVQVVNMQGSPVGELELDEYVFGIEPNTHVMHQAVVGQLASQRRGTHSTLLRGEVRGGGRKPWRQKGTGRARAGSIRSPLWRGGAVLFGPKPRKYGFSLPKKVRRLALRSALSSKVNEQKLIVLEDLSLNEAKTREMVKVLQALNVSKKALIVTDEFMETIERSARNIAGIKTTAVEGMNIYDLLNSDVIVMTKAAVTKTEEVLA</sequence>
<name>RL4_DESHY</name>
<keyword id="KW-1185">Reference proteome</keyword>
<keyword id="KW-0687">Ribonucleoprotein</keyword>
<keyword id="KW-0689">Ribosomal protein</keyword>
<keyword id="KW-0694">RNA-binding</keyword>
<keyword id="KW-0699">rRNA-binding</keyword>
<proteinExistence type="inferred from homology"/>
<feature type="chain" id="PRO_1000052392" description="Large ribosomal subunit protein uL4">
    <location>
        <begin position="1"/>
        <end position="207"/>
    </location>
</feature>
<feature type="region of interest" description="Disordered" evidence="2">
    <location>
        <begin position="56"/>
        <end position="76"/>
    </location>
</feature>
<feature type="compositionally biased region" description="Basic residues" evidence="2">
    <location>
        <begin position="60"/>
        <end position="71"/>
    </location>
</feature>
<organism>
    <name type="scientific">Desulfitobacterium hafniense (strain Y51)</name>
    <dbReference type="NCBI Taxonomy" id="138119"/>
    <lineage>
        <taxon>Bacteria</taxon>
        <taxon>Bacillati</taxon>
        <taxon>Bacillota</taxon>
        <taxon>Clostridia</taxon>
        <taxon>Eubacteriales</taxon>
        <taxon>Desulfitobacteriaceae</taxon>
        <taxon>Desulfitobacterium</taxon>
    </lineage>
</organism>
<protein>
    <recommendedName>
        <fullName evidence="1">Large ribosomal subunit protein uL4</fullName>
    </recommendedName>
    <alternativeName>
        <fullName evidence="3">50S ribosomal protein L4</fullName>
    </alternativeName>
</protein>
<comment type="function">
    <text evidence="1">One of the primary rRNA binding proteins, this protein initially binds near the 5'-end of the 23S rRNA. It is important during the early stages of 50S assembly. It makes multiple contacts with different domains of the 23S rRNA in the assembled 50S subunit and ribosome.</text>
</comment>
<comment type="function">
    <text evidence="1">Forms part of the polypeptide exit tunnel.</text>
</comment>
<comment type="subunit">
    <text evidence="1">Part of the 50S ribosomal subunit.</text>
</comment>
<comment type="similarity">
    <text evidence="1">Belongs to the universal ribosomal protein uL4 family.</text>
</comment>
<gene>
    <name evidence="1" type="primary">rplD</name>
    <name type="ordered locus">DSY0472</name>
</gene>